<accession>P53967</accession>
<name>YNC8_YEAST</name>
<comment type="miscellaneous">
    <text evidence="1">Partially overlaps KTR5.</text>
</comment>
<comment type="caution">
    <text evidence="2">Product of a dubious gene prediction unlikely to encode a functional protein. Because of that it is not part of the S.cerevisiae S288c complete/reference proteome set.</text>
</comment>
<proteinExistence type="uncertain"/>
<reference key="1">
    <citation type="journal article" date="1997" name="Nature">
        <title>The nucleotide sequence of Saccharomyces cerevisiae chromosome XIV and its evolutionary implications.</title>
        <authorList>
            <person name="Philippsen P."/>
            <person name="Kleine K."/>
            <person name="Poehlmann R."/>
            <person name="Duesterhoeft A."/>
            <person name="Hamberg K."/>
            <person name="Hegemann J.H."/>
            <person name="Obermaier B."/>
            <person name="Urrestarazu L.A."/>
            <person name="Aert R."/>
            <person name="Albermann K."/>
            <person name="Altmann R."/>
            <person name="Andre B."/>
            <person name="Baladron V."/>
            <person name="Ballesta J.P.G."/>
            <person name="Becam A.-M."/>
            <person name="Beinhauer J.D."/>
            <person name="Boskovic J."/>
            <person name="Buitrago M.J."/>
            <person name="Bussereau F."/>
            <person name="Coster F."/>
            <person name="Crouzet M."/>
            <person name="D'Angelo M."/>
            <person name="Dal Pero F."/>
            <person name="De Antoni A."/>
            <person name="del Rey F."/>
            <person name="Doignon F."/>
            <person name="Domdey H."/>
            <person name="Dubois E."/>
            <person name="Fiedler T.A."/>
            <person name="Fleig U."/>
            <person name="Floeth M."/>
            <person name="Fritz C."/>
            <person name="Gaillardin C."/>
            <person name="Garcia-Cantalejo J.M."/>
            <person name="Glansdorff N."/>
            <person name="Goffeau A."/>
            <person name="Gueldener U."/>
            <person name="Herbert C.J."/>
            <person name="Heumann K."/>
            <person name="Heuss-Neitzel D."/>
            <person name="Hilbert H."/>
            <person name="Hinni K."/>
            <person name="Iraqui Houssaini I."/>
            <person name="Jacquet M."/>
            <person name="Jimenez A."/>
            <person name="Jonniaux J.-L."/>
            <person name="Karpfinger-Hartl L."/>
            <person name="Lanfranchi G."/>
            <person name="Lepingle A."/>
            <person name="Levesque H."/>
            <person name="Lyck R."/>
            <person name="Maftahi M."/>
            <person name="Mallet L."/>
            <person name="Maurer C.T.C."/>
            <person name="Messenguy F."/>
            <person name="Mewes H.-W."/>
            <person name="Moestl D."/>
            <person name="Nasr F."/>
            <person name="Nicaud J.-M."/>
            <person name="Niedenthal R.K."/>
            <person name="Pandolfo D."/>
            <person name="Pierard A."/>
            <person name="Piravandi E."/>
            <person name="Planta R.J."/>
            <person name="Pohl T.M."/>
            <person name="Purnelle B."/>
            <person name="Rebischung C."/>
            <person name="Remacha M.A."/>
            <person name="Revuelta J.L."/>
            <person name="Rinke M."/>
            <person name="Saiz J.E."/>
            <person name="Sartorello F."/>
            <person name="Scherens B."/>
            <person name="Sen-Gupta M."/>
            <person name="Soler-Mira A."/>
            <person name="Urbanus J.H.M."/>
            <person name="Valle G."/>
            <person name="Van Dyck L."/>
            <person name="Verhasselt P."/>
            <person name="Vierendeels F."/>
            <person name="Vissers S."/>
            <person name="Voet M."/>
            <person name="Volckaert G."/>
            <person name="Wach A."/>
            <person name="Wambutt R."/>
            <person name="Wedler H."/>
            <person name="Zollner A."/>
            <person name="Hani J."/>
        </authorList>
    </citation>
    <scope>NUCLEOTIDE SEQUENCE [LARGE SCALE GENOMIC DNA]</scope>
    <source>
        <strain>ATCC 204508 / S288c</strain>
    </source>
</reference>
<reference key="2">
    <citation type="journal article" date="2014" name="G3 (Bethesda)">
        <title>The reference genome sequence of Saccharomyces cerevisiae: Then and now.</title>
        <authorList>
            <person name="Engel S.R."/>
            <person name="Dietrich F.S."/>
            <person name="Fisk D.G."/>
            <person name="Binkley G."/>
            <person name="Balakrishnan R."/>
            <person name="Costanzo M.C."/>
            <person name="Dwight S.S."/>
            <person name="Hitz B.C."/>
            <person name="Karra K."/>
            <person name="Nash R.S."/>
            <person name="Weng S."/>
            <person name="Wong E.D."/>
            <person name="Lloyd P."/>
            <person name="Skrzypek M.S."/>
            <person name="Miyasato S.R."/>
            <person name="Simison M."/>
            <person name="Cherry J.M."/>
        </authorList>
    </citation>
    <scope>GENOME REANNOTATION</scope>
    <source>
        <strain>ATCC 204508 / S288c</strain>
    </source>
</reference>
<reference key="3">
    <citation type="journal article" date="2007" name="Genome Res.">
        <title>Approaching a complete repository of sequence-verified protein-encoding clones for Saccharomyces cerevisiae.</title>
        <authorList>
            <person name="Hu Y."/>
            <person name="Rolfs A."/>
            <person name="Bhullar B."/>
            <person name="Murthy T.V.S."/>
            <person name="Zhu C."/>
            <person name="Berger M.F."/>
            <person name="Camargo A.A."/>
            <person name="Kelley F."/>
            <person name="McCarron S."/>
            <person name="Jepson D."/>
            <person name="Richardson A."/>
            <person name="Raphael J."/>
            <person name="Moreira D."/>
            <person name="Taycher E."/>
            <person name="Zuo D."/>
            <person name="Mohr S."/>
            <person name="Kane M.F."/>
            <person name="Williamson J."/>
            <person name="Simpson A.J.G."/>
            <person name="Bulyk M.L."/>
            <person name="Harlow E."/>
            <person name="Marsischky G."/>
            <person name="Kolodner R.D."/>
            <person name="LaBaer J."/>
        </authorList>
    </citation>
    <scope>NUCLEOTIDE SEQUENCE [GENOMIC DNA]</scope>
    <source>
        <strain>ATCC 204508 / S288c</strain>
    </source>
</reference>
<sequence>MVMTKAIRMHVAVRLQWIHPRNAFIVLLISNICYLMTMCRIETHLLMTPPLNKTICARKHSYLLLRIFLKTLSRMPAQIFQFSWHHPHTACLKCTIQKMREKANT</sequence>
<dbReference type="EMBL" id="Z71305">
    <property type="protein sequence ID" value="CAA95890.1"/>
    <property type="molecule type" value="Genomic_DNA"/>
</dbReference>
<dbReference type="EMBL" id="AY693351">
    <property type="protein sequence ID" value="AAT93370.1"/>
    <property type="molecule type" value="Genomic_DNA"/>
</dbReference>
<dbReference type="PIR" id="S62940">
    <property type="entry name" value="S62940"/>
</dbReference>
<dbReference type="DIP" id="DIP-4372N"/>
<dbReference type="STRING" id="4932.YNL028W"/>
<dbReference type="PaxDb" id="4932-YNL028W"/>
<dbReference type="EnsemblFungi" id="YNL028W_mRNA">
    <property type="protein sequence ID" value="YNL028W"/>
    <property type="gene ID" value="YNL028W"/>
</dbReference>
<dbReference type="AGR" id="SGD:S000004973"/>
<dbReference type="SGD" id="S000004973">
    <property type="gene designation" value="YNL028W"/>
</dbReference>
<dbReference type="HOGENOM" id="CLU_2238710_0_0_1"/>
<protein>
    <recommendedName>
        <fullName>Putative uncharacterized protein YNL028W</fullName>
    </recommendedName>
</protein>
<evidence type="ECO:0000305" key="1"/>
<evidence type="ECO:0000305" key="2">
    <source>
    </source>
</evidence>
<feature type="chain" id="PRO_0000203459" description="Putative uncharacterized protein YNL028W">
    <location>
        <begin position="1"/>
        <end position="105"/>
    </location>
</feature>
<gene>
    <name type="ordered locus">YNL028W</name>
    <name type="ORF">N2758</name>
</gene>
<organism>
    <name type="scientific">Saccharomyces cerevisiae (strain ATCC 204508 / S288c)</name>
    <name type="common">Baker's yeast</name>
    <dbReference type="NCBI Taxonomy" id="559292"/>
    <lineage>
        <taxon>Eukaryota</taxon>
        <taxon>Fungi</taxon>
        <taxon>Dikarya</taxon>
        <taxon>Ascomycota</taxon>
        <taxon>Saccharomycotina</taxon>
        <taxon>Saccharomycetes</taxon>
        <taxon>Saccharomycetales</taxon>
        <taxon>Saccharomycetaceae</taxon>
        <taxon>Saccharomyces</taxon>
    </lineage>
</organism>